<evidence type="ECO:0000305" key="1"/>
<gene>
    <name type="ORF">DDB_G0287093</name>
</gene>
<name>U523C_DICDI</name>
<protein>
    <recommendedName>
        <fullName>UPF0523 protein C</fullName>
    </recommendedName>
</protein>
<comment type="similarity">
    <text evidence="1">Belongs to the UPF0523 family.</text>
</comment>
<dbReference type="EMBL" id="AAFI02000096">
    <property type="protein sequence ID" value="EAL63911.1"/>
    <property type="molecule type" value="Genomic_DNA"/>
</dbReference>
<dbReference type="RefSeq" id="XP_637423.1">
    <property type="nucleotide sequence ID" value="XM_632331.1"/>
</dbReference>
<dbReference type="SMR" id="Q54KU7"/>
<dbReference type="FunCoup" id="Q54KU7">
    <property type="interactions" value="2"/>
</dbReference>
<dbReference type="PaxDb" id="44689-DDB0187279"/>
<dbReference type="EnsemblProtists" id="EAL63911">
    <property type="protein sequence ID" value="EAL63911"/>
    <property type="gene ID" value="DDB_G0287093"/>
</dbReference>
<dbReference type="GeneID" id="8625956"/>
<dbReference type="KEGG" id="ddi:DDB_G0287093"/>
<dbReference type="dictyBase" id="DDB_G0287093"/>
<dbReference type="VEuPathDB" id="AmoebaDB:DDB_G0287093"/>
<dbReference type="eggNOG" id="ENOG502RI8Q">
    <property type="taxonomic scope" value="Eukaryota"/>
</dbReference>
<dbReference type="HOGENOM" id="CLU_1689981_0_0_1"/>
<dbReference type="InParanoid" id="Q54KU7"/>
<dbReference type="OMA" id="NESKYSH"/>
<dbReference type="PhylomeDB" id="Q54KU7"/>
<dbReference type="PRO" id="PR:Q54KU7"/>
<dbReference type="Proteomes" id="UP000002195">
    <property type="component" value="Chromosome 4"/>
</dbReference>
<dbReference type="Gene3D" id="3.10.450.50">
    <property type="match status" value="1"/>
</dbReference>
<dbReference type="InterPro" id="IPR032710">
    <property type="entry name" value="NTF2-like_dom_sf"/>
</dbReference>
<dbReference type="SUPFAM" id="SSF54427">
    <property type="entry name" value="NTF2-like"/>
    <property type="match status" value="1"/>
</dbReference>
<sequence>MESKENNILRLNRVADSFVQFFNNREFNNLELISQIFNNPESDQWWMSGDENMYPFSGWKPIQKRLNDMIPLIHGYDQFSFTESNKTFNIEKNLIIMEARTSAVGYGDNIYINEYAFFLTVNNDGKICLIKEYFDPSEILKYSLSNKKLTELYHKV</sequence>
<accession>Q54KU7</accession>
<organism>
    <name type="scientific">Dictyostelium discoideum</name>
    <name type="common">Social amoeba</name>
    <dbReference type="NCBI Taxonomy" id="44689"/>
    <lineage>
        <taxon>Eukaryota</taxon>
        <taxon>Amoebozoa</taxon>
        <taxon>Evosea</taxon>
        <taxon>Eumycetozoa</taxon>
        <taxon>Dictyostelia</taxon>
        <taxon>Dictyosteliales</taxon>
        <taxon>Dictyosteliaceae</taxon>
        <taxon>Dictyostelium</taxon>
    </lineage>
</organism>
<proteinExistence type="inferred from homology"/>
<feature type="chain" id="PRO_0000319968" description="UPF0523 protein C">
    <location>
        <begin position="1"/>
        <end position="156"/>
    </location>
</feature>
<reference key="1">
    <citation type="journal article" date="2005" name="Nature">
        <title>The genome of the social amoeba Dictyostelium discoideum.</title>
        <authorList>
            <person name="Eichinger L."/>
            <person name="Pachebat J.A."/>
            <person name="Gloeckner G."/>
            <person name="Rajandream M.A."/>
            <person name="Sucgang R."/>
            <person name="Berriman M."/>
            <person name="Song J."/>
            <person name="Olsen R."/>
            <person name="Szafranski K."/>
            <person name="Xu Q."/>
            <person name="Tunggal B."/>
            <person name="Kummerfeld S."/>
            <person name="Madera M."/>
            <person name="Konfortov B.A."/>
            <person name="Rivero F."/>
            <person name="Bankier A.T."/>
            <person name="Lehmann R."/>
            <person name="Hamlin N."/>
            <person name="Davies R."/>
            <person name="Gaudet P."/>
            <person name="Fey P."/>
            <person name="Pilcher K."/>
            <person name="Chen G."/>
            <person name="Saunders D."/>
            <person name="Sodergren E.J."/>
            <person name="Davis P."/>
            <person name="Kerhornou A."/>
            <person name="Nie X."/>
            <person name="Hall N."/>
            <person name="Anjard C."/>
            <person name="Hemphill L."/>
            <person name="Bason N."/>
            <person name="Farbrother P."/>
            <person name="Desany B."/>
            <person name="Just E."/>
            <person name="Morio T."/>
            <person name="Rost R."/>
            <person name="Churcher C.M."/>
            <person name="Cooper J."/>
            <person name="Haydock S."/>
            <person name="van Driessche N."/>
            <person name="Cronin A."/>
            <person name="Goodhead I."/>
            <person name="Muzny D.M."/>
            <person name="Mourier T."/>
            <person name="Pain A."/>
            <person name="Lu M."/>
            <person name="Harper D."/>
            <person name="Lindsay R."/>
            <person name="Hauser H."/>
            <person name="James K.D."/>
            <person name="Quiles M."/>
            <person name="Madan Babu M."/>
            <person name="Saito T."/>
            <person name="Buchrieser C."/>
            <person name="Wardroper A."/>
            <person name="Felder M."/>
            <person name="Thangavelu M."/>
            <person name="Johnson D."/>
            <person name="Knights A."/>
            <person name="Loulseged H."/>
            <person name="Mungall K.L."/>
            <person name="Oliver K."/>
            <person name="Price C."/>
            <person name="Quail M.A."/>
            <person name="Urushihara H."/>
            <person name="Hernandez J."/>
            <person name="Rabbinowitsch E."/>
            <person name="Steffen D."/>
            <person name="Sanders M."/>
            <person name="Ma J."/>
            <person name="Kohara Y."/>
            <person name="Sharp S."/>
            <person name="Simmonds M.N."/>
            <person name="Spiegler S."/>
            <person name="Tivey A."/>
            <person name="Sugano S."/>
            <person name="White B."/>
            <person name="Walker D."/>
            <person name="Woodward J.R."/>
            <person name="Winckler T."/>
            <person name="Tanaka Y."/>
            <person name="Shaulsky G."/>
            <person name="Schleicher M."/>
            <person name="Weinstock G.M."/>
            <person name="Rosenthal A."/>
            <person name="Cox E.C."/>
            <person name="Chisholm R.L."/>
            <person name="Gibbs R.A."/>
            <person name="Loomis W.F."/>
            <person name="Platzer M."/>
            <person name="Kay R.R."/>
            <person name="Williams J.G."/>
            <person name="Dear P.H."/>
            <person name="Noegel A.A."/>
            <person name="Barrell B.G."/>
            <person name="Kuspa A."/>
        </authorList>
    </citation>
    <scope>NUCLEOTIDE SEQUENCE [LARGE SCALE GENOMIC DNA]</scope>
    <source>
        <strain>AX4</strain>
    </source>
</reference>
<keyword id="KW-1185">Reference proteome</keyword>